<accession>Q96HE7</accession>
<accession>A8K9X4</accession>
<accession>A8MYW1</accession>
<accession>Q7LD45</accession>
<accession>Q9P1Q9</accession>
<accession>Q9UKV6</accession>
<proteinExistence type="evidence at protein level"/>
<name>ERO1A_HUMAN</name>
<feature type="signal peptide" evidence="8">
    <location>
        <begin position="1"/>
        <end position="23"/>
    </location>
</feature>
<feature type="chain" id="PRO_0000008415" description="ERO1-like protein alpha">
    <location>
        <begin position="24"/>
        <end position="468"/>
    </location>
</feature>
<feature type="binding site" evidence="20 26 27">
    <location>
        <position position="187"/>
    </location>
    <ligand>
        <name>FAD</name>
        <dbReference type="ChEBI" id="CHEBI:57692"/>
    </ligand>
</feature>
<feature type="binding site" evidence="20 26 27">
    <location>
        <position position="189"/>
    </location>
    <ligand>
        <name>FAD</name>
        <dbReference type="ChEBI" id="CHEBI:57692"/>
    </ligand>
</feature>
<feature type="binding site" evidence="20 26 27">
    <location>
        <position position="200"/>
    </location>
    <ligand>
        <name>FAD</name>
        <dbReference type="ChEBI" id="CHEBI:57692"/>
    </ligand>
</feature>
<feature type="binding site" evidence="20 26 27">
    <location>
        <position position="252"/>
    </location>
    <ligand>
        <name>FAD</name>
        <dbReference type="ChEBI" id="CHEBI:57692"/>
    </ligand>
</feature>
<feature type="binding site" evidence="20 26 27">
    <location>
        <position position="255"/>
    </location>
    <ligand>
        <name>FAD</name>
        <dbReference type="ChEBI" id="CHEBI:57692"/>
    </ligand>
</feature>
<feature type="binding site" evidence="20 26 27">
    <location>
        <position position="287"/>
    </location>
    <ligand>
        <name>FAD</name>
        <dbReference type="ChEBI" id="CHEBI:57692"/>
    </ligand>
</feature>
<feature type="binding site" evidence="20 26 27">
    <location>
        <position position="300"/>
    </location>
    <ligand>
        <name>FAD</name>
        <dbReference type="ChEBI" id="CHEBI:57692"/>
    </ligand>
</feature>
<feature type="modified residue" description="Phosphoserine" evidence="30">
    <location>
        <position position="106"/>
    </location>
</feature>
<feature type="modified residue" description="Phosphoserine" evidence="28 29">
    <location>
        <position position="143"/>
    </location>
</feature>
<feature type="modified residue" description="Phosphoserine; by FAM20C" evidence="23">
    <location>
        <position position="145"/>
    </location>
</feature>
<feature type="glycosylation site" description="N-linked (GlcNAc...) asparagine" evidence="19">
    <location>
        <position position="280"/>
    </location>
</feature>
<feature type="glycosylation site" description="N-linked (GlcNAc...) asparagine" evidence="4">
    <location>
        <position position="384"/>
    </location>
</feature>
<feature type="disulfide bond" evidence="20 26 27">
    <location>
        <begin position="35"/>
        <end position="48"/>
    </location>
</feature>
<feature type="disulfide bond" evidence="20 26 27">
    <location>
        <begin position="37"/>
        <end position="46"/>
    </location>
</feature>
<feature type="disulfide bond" evidence="20 26 27">
    <location>
        <begin position="85"/>
        <end position="391"/>
    </location>
</feature>
<feature type="disulfide bond" description="Alternate" evidence="20 27">
    <location>
        <begin position="94"/>
        <end position="131"/>
    </location>
</feature>
<feature type="disulfide bond" description="Redox-active; alternate" evidence="14 18">
    <location>
        <begin position="94"/>
        <end position="99"/>
    </location>
</feature>
<feature type="disulfide bond" description="Alternate" evidence="24">
    <location>
        <begin position="99"/>
        <end position="104"/>
    </location>
</feature>
<feature type="disulfide bond" evidence="20 26 27">
    <location>
        <begin position="208"/>
        <end position="241"/>
    </location>
</feature>
<feature type="disulfide bond" description="Redox-active" evidence="20 26 27">
    <location>
        <begin position="394"/>
        <end position="397"/>
    </location>
</feature>
<feature type="mutagenesis site" description="Alters protein folding and stability. Loss of regulatory disulfide bond formation and increased activity towards P4HB; when associated with A-131." evidence="14 18">
    <original>C</original>
    <variation>A</variation>
    <location>
        <position position="85"/>
    </location>
</feature>
<feature type="mutagenesis site" description="Induces a decrease in activity." evidence="14 18">
    <original>C</original>
    <variation>S</variation>
    <location>
        <position position="85"/>
    </location>
</feature>
<feature type="mutagenesis site" description="Induces a decrease in activity towards thioredoxin. Loss of activity towards thioredoxin and loss of regulatory disulfide bond formation; when associated with A-99." evidence="14 18">
    <original>C</original>
    <variation>S</variation>
    <location>
        <position position="94"/>
    </location>
</feature>
<feature type="mutagenesis site" description="Acts as a weak dominant-negative mutant. Loss of activity towards thioredoxin. Loss of regulatory disulfide bond formation; when associated with A-94." evidence="14 18">
    <original>C</original>
    <variation>A</variation>
    <location>
        <position position="99"/>
    </location>
</feature>
<feature type="mutagenesis site" description="No effect. Strongly increased activity towards P4HB and UPR induction, but no broad oxidative injury; when associated with A-131." evidence="14 18 22">
    <original>C</original>
    <variation>A</variation>
    <location>
        <position position="104"/>
    </location>
</feature>
<feature type="mutagenesis site" description="No effect." evidence="14 18 22">
    <original>C</original>
    <variation>S</variation>
    <location>
        <position position="104"/>
    </location>
</feature>
<feature type="mutagenesis site" description="Loss of regulatory disulfide bond formation and increased activity towards P4HB. Loss of regulatory disulfide bond formation and strongly increased activity towards P4HB; when associated with A-85. Loss of regulatory disulfide bond formation, strongly increased activity towards P4HB and UPR induction, but no broad oxidative injury; when associated with A-104." evidence="14 17 18 22">
    <original>C</original>
    <variation>A</variation>
    <location>
        <position position="131"/>
    </location>
</feature>
<feature type="mutagenesis site" description="Abolishes phosphorylation. Does not affect interaction with ERP44." evidence="23">
    <original>S</original>
    <variation>A</variation>
    <location>
        <position position="145"/>
    </location>
</feature>
<feature type="mutagenesis site" description="Phosphomimetic mutant. Does not affect interaction with ERP44. Shows two-fold increase in enzyme activity. Accelerates immunoglobulin folding." evidence="23">
    <original>S</original>
    <variation>E</variation>
    <location>
        <position position="145"/>
    </location>
</feature>
<feature type="mutagenesis site" description="No effect." evidence="14 18">
    <original>C</original>
    <variation>A</variation>
    <location>
        <position position="166"/>
    </location>
</feature>
<feature type="mutagenesis site" description="No effect." evidence="14 18">
    <original>C</original>
    <variation>A</variation>
    <variation>S</variation>
    <location>
        <position position="208"/>
    </location>
</feature>
<feature type="mutagenesis site" description="No effect." evidence="14 18">
    <original>C</original>
    <variation>A</variation>
    <variation>S</variation>
    <location>
        <position position="241"/>
    </location>
</feature>
<feature type="mutagenesis site" description="No effect on activity." evidence="14">
    <original>N</original>
    <variation>A</variation>
    <location>
        <position position="280"/>
    </location>
</feature>
<feature type="mutagenesis site" description="No effect on activity." evidence="14">
    <original>N</original>
    <variation>A</variation>
    <location>
        <position position="384"/>
    </location>
</feature>
<feature type="mutagenesis site" description="Alters protein folding. Prevents formation of regulatory disulfide bond and down-regulation of activity. Decreases association with P4HB." evidence="5 7 14">
    <original>C</original>
    <variation>A</variation>
    <location>
        <position position="391"/>
    </location>
</feature>
<feature type="mutagenesis site" description="Retains activity towards P4HB. Does not act as a dominant negative mutant. Induces defects in folding. Remains associated with P4HB." evidence="5 7 9 14 17">
    <original>C</original>
    <variation>A</variation>
    <location>
        <position position="394"/>
    </location>
</feature>
<feature type="mutagenesis site" description="Increased catalytical activity." evidence="21">
    <original>F</original>
    <variation>D</variation>
    <location>
        <position position="395"/>
    </location>
</feature>
<feature type="mutagenesis site" description="Acts as a dominant negative mutant; does not induce defects in folding; remains associated with P4HB." evidence="7 9 14">
    <original>C</original>
    <variation>A</variation>
    <location>
        <position position="397"/>
    </location>
</feature>
<feature type="sequence conflict" description="In Ref. 5; AAH08674." evidence="24" ref="5">
    <original>E</original>
    <variation>K</variation>
    <location>
        <position position="456"/>
    </location>
</feature>
<feature type="strand" evidence="31">
    <location>
        <begin position="35"/>
        <end position="38"/>
    </location>
</feature>
<feature type="strand" evidence="31">
    <location>
        <begin position="40"/>
        <end position="43"/>
    </location>
</feature>
<feature type="strand" evidence="31">
    <location>
        <begin position="45"/>
        <end position="47"/>
    </location>
</feature>
<feature type="helix" evidence="31">
    <location>
        <begin position="50"/>
        <end position="59"/>
    </location>
</feature>
<feature type="helix" evidence="31">
    <location>
        <begin position="62"/>
        <end position="70"/>
    </location>
</feature>
<feature type="helix" evidence="31">
    <location>
        <begin position="72"/>
        <end position="75"/>
    </location>
</feature>
<feature type="strand" evidence="31">
    <location>
        <begin position="76"/>
        <end position="79"/>
    </location>
</feature>
<feature type="helix" evidence="31">
    <location>
        <begin position="134"/>
        <end position="138"/>
    </location>
</feature>
<feature type="helix" evidence="31">
    <location>
        <begin position="146"/>
        <end position="161"/>
    </location>
</feature>
<feature type="strand" evidence="31">
    <location>
        <begin position="177"/>
        <end position="180"/>
    </location>
</feature>
<feature type="helix" evidence="31">
    <location>
        <begin position="181"/>
        <end position="183"/>
    </location>
</feature>
<feature type="helix" evidence="31">
    <location>
        <begin position="193"/>
        <end position="204"/>
    </location>
</feature>
<feature type="helix" evidence="31">
    <location>
        <begin position="245"/>
        <end position="264"/>
    </location>
</feature>
<feature type="strand" evidence="31">
    <location>
        <begin position="266"/>
        <end position="270"/>
    </location>
</feature>
<feature type="strand" evidence="31">
    <location>
        <begin position="275"/>
        <end position="278"/>
    </location>
</feature>
<feature type="helix" evidence="31">
    <location>
        <begin position="281"/>
        <end position="288"/>
    </location>
</feature>
<feature type="helix" evidence="31">
    <location>
        <begin position="290"/>
        <end position="293"/>
    </location>
</feature>
<feature type="helix" evidence="31">
    <location>
        <begin position="296"/>
        <end position="317"/>
    </location>
</feature>
<feature type="helix" evidence="31">
    <location>
        <begin position="319"/>
        <end position="323"/>
    </location>
</feature>
<feature type="helix" evidence="31">
    <location>
        <begin position="336"/>
        <end position="353"/>
    </location>
</feature>
<feature type="strand" evidence="31">
    <location>
        <begin position="356"/>
        <end position="358"/>
    </location>
</feature>
<feature type="helix" evidence="31">
    <location>
        <begin position="369"/>
        <end position="389"/>
    </location>
</feature>
<feature type="helix" evidence="31">
    <location>
        <begin position="395"/>
        <end position="415"/>
    </location>
</feature>
<feature type="helix" evidence="31">
    <location>
        <begin position="418"/>
        <end position="422"/>
    </location>
</feature>
<feature type="strand" evidence="31">
    <location>
        <begin position="426"/>
        <end position="428"/>
    </location>
</feature>
<feature type="strand" evidence="32">
    <location>
        <begin position="431"/>
        <end position="433"/>
    </location>
</feature>
<feature type="helix" evidence="31">
    <location>
        <begin position="437"/>
        <end position="463"/>
    </location>
</feature>
<gene>
    <name evidence="25" type="primary">ERO1A</name>
    <name type="synonym">ERO1L</name>
    <name type="ORF">UNQ434/PRO865</name>
</gene>
<sequence length="468" mass="54393">MGRGWGFLFGLLGAVWLLSSGHGEEQPPETAAQRCFCQVSGYLDDCTCDVETIDRFNNYRLFPRLQKLLESDYFRYYKVNLKRPCPFWNDISQCGRRDCAVKPCQSDEVPDGIKSASYKYSEEANNLIEECEQAERLGAVDESLSEETQKAVLQWTKHDDSSDNFCEADDIQSPEAEYVDLLLNPERYTGYKGPDAWKIWNVIYEENCFKPQTIKRPLNPLASGQGTSEENTFYSWLEGLCVEKRAFYRLISGLHASINVHLSARYLLQETWLEKKWGHNITEFQQRFDGILTEGEGPRRLKNLYFLYLIELRALSKVLPFFERPDFQLFTGNKIQDEENKMLLLEILHEIKSFPLHFDENSFFAGDKKEAHKLKEDFRLHFRNISRIMDCVGCFKCRLWGKLQTQGLGTALKILFSEKLIANMPESGPSYEFHLTRQEIVSLFNAFGRISTSVKELENFRNLLQNIH</sequence>
<comment type="function">
    <text evidence="5 7 9 11 17 18 22 23">Oxidoreductase involved in disulfide bond formation in the endoplasmic reticulum. Efficiently reoxidizes P4HB/PDI, the enzyme catalyzing protein disulfide formation, in order to allow P4HB to sustain additional rounds of disulfide formation. Following P4HB reoxidation, passes its electrons to molecular oxygen via FAD, leading to the production of reactive oxygen species (ROS) in the cell. Required for the proper folding of immunoglobulins (PubMed:29858230). Plays an important role in ER stress-induced, CHOP-dependent apoptosis by activating the inositol 1,4,5-trisphosphate receptor IP3R1. Involved in the release of the unfolded cholera toxin from reduced P4HB/PDI in case of infection by V.cholerae, thereby playing a role in retrotranslocation of the toxin.</text>
</comment>
<comment type="cofactor">
    <cofactor evidence="18 20">
        <name>FAD</name>
        <dbReference type="ChEBI" id="CHEBI:57692"/>
    </cofactor>
</comment>
<comment type="activity regulation">
    <text evidence="15 17 18">Enzyme activity is tightly regulated to prevent the accumulation of reactive oxygen species in the endoplasmic reticulum. Reversibly down-regulated by the formation of disulfide bonds between the active site Cys-94 and Cys-131, and between Cys-99 and Cys-104. Glutathione may be required to regulate its activity in the endoplasmic reticulum.</text>
</comment>
<comment type="subunit">
    <text evidence="10 16 18 23">Predominantly monomer. May function both as a monomer and a homodimer. Interacts with PDILT (PubMed:15475357). Interacts with ERP44; the interaction results in retention of ERO1A in the endoplasmic reticulum (PubMed:11847130, PubMed:29858230).</text>
</comment>
<comment type="interaction">
    <interactant intactId="EBI-2564539">
        <id>Q96HE7</id>
    </interactant>
    <interactant intactId="EBI-743771">
        <id>Q92624</id>
        <label>APPBP2</label>
    </interactant>
    <organismsDiffer>false</organismsDiffer>
    <experiments>3</experiments>
</comment>
<comment type="interaction">
    <interactant intactId="EBI-2564539">
        <id>Q96HE7</id>
    </interactant>
    <interactant intactId="EBI-2865388">
        <id>Q969G2</id>
        <label>LHX4</label>
    </interactant>
    <organismsDiffer>false</organismsDiffer>
    <experiments>3</experiments>
</comment>
<comment type="interaction">
    <interactant intactId="EBI-2564539">
        <id>Q96HE7</id>
    </interactant>
    <interactant intactId="EBI-395883">
        <id>P07237</id>
        <label>P4HB</label>
    </interactant>
    <organismsDiffer>false</organismsDiffer>
    <experiments>2</experiments>
</comment>
<comment type="interaction">
    <interactant intactId="EBI-2564539">
        <id>Q96HE7</id>
    </interactant>
    <interactant intactId="EBI-979862">
        <id>P30101</id>
        <label>PDIA3</label>
    </interactant>
    <organismsDiffer>false</organismsDiffer>
    <experiments>3</experiments>
</comment>
<comment type="subcellular location">
    <subcellularLocation>
        <location evidence="5 13">Endoplasmic reticulum membrane</location>
        <topology evidence="5 13">Peripheral membrane protein</topology>
        <orientation evidence="5 13">Lumenal side</orientation>
    </subcellularLocation>
    <subcellularLocation>
        <location evidence="23">Golgi apparatus lumen</location>
    </subcellularLocation>
    <subcellularLocation>
        <location evidence="23">Secreted</location>
    </subcellularLocation>
    <subcellularLocation>
        <location evidence="3">Cell projection</location>
        <location evidence="3">Dendrite</location>
    </subcellularLocation>
    <text evidence="3 23">The association with ERP44 is essential for its retention in the endoplasmic reticulum (PubMed:29858230). In neurons, it localizes to dendrites (By similarity).</text>
</comment>
<comment type="tissue specificity">
    <text evidence="6">Widely expressed at low level. Expressed at high level in upper digestive tract. Highly expressed in esophagus. Weakly expressed in stomach and duodenum.</text>
</comment>
<comment type="induction">
    <text evidence="12">Stimulated by hypoxia; suggesting that it is regulated via the HIF-pathway.</text>
</comment>
<comment type="PTM">
    <text evidence="5 7 19">N-glycosylated.</text>
</comment>
<comment type="PTM">
    <text evidence="1 22">The Cys-94/Cys-99 and Cys-394/Cys-397 disulfide bonds constitute the redox-active center. The Cys-94/Cys-99 disulfide bond may accept electron from P4HB and funnel them to the active site disulfide Cys-394/Cys-397 (By similarity). The regulatory Cys-99/Cys-104 disulfide bond stabilizes the other regulatory bond Cys-94/Cys-131 (PubMed:23027870).</text>
</comment>
<comment type="PTM">
    <text evidence="2 23">Phosphorylated on Ser-145 by FAM20C in the Golgi which increases its enzymatic activity (PubMed:29858230). Phosphorylation is induced by lactation (By similarity). It is also induced by hypoxia and reductive stress (PubMed:29858230).</text>
</comment>
<comment type="similarity">
    <text evidence="24">Belongs to the EROs family.</text>
</comment>
<dbReference type="EC" id="1.8.4.-" evidence="23"/>
<dbReference type="EMBL" id="AF081886">
    <property type="protein sequence ID" value="AAF35260.1"/>
    <property type="molecule type" value="mRNA"/>
</dbReference>
<dbReference type="EMBL" id="AF123887">
    <property type="protein sequence ID" value="AAF06104.1"/>
    <property type="molecule type" value="mRNA"/>
</dbReference>
<dbReference type="EMBL" id="AY358463">
    <property type="protein sequence ID" value="AAQ88828.1"/>
    <property type="molecule type" value="mRNA"/>
</dbReference>
<dbReference type="EMBL" id="AK292839">
    <property type="protein sequence ID" value="BAF85528.1"/>
    <property type="molecule type" value="mRNA"/>
</dbReference>
<dbReference type="EMBL" id="AL133453">
    <property type="status" value="NOT_ANNOTATED_CDS"/>
    <property type="molecule type" value="Genomic_DNA"/>
</dbReference>
<dbReference type="EMBL" id="BC008674">
    <property type="protein sequence ID" value="AAH08674.1"/>
    <property type="molecule type" value="mRNA"/>
</dbReference>
<dbReference type="EMBL" id="BC012941">
    <property type="protein sequence ID" value="AAH12941.1"/>
    <property type="molecule type" value="mRNA"/>
</dbReference>
<dbReference type="CCDS" id="CCDS9709.1"/>
<dbReference type="RefSeq" id="NP_055399.1">
    <property type="nucleotide sequence ID" value="NM_014584.3"/>
</dbReference>
<dbReference type="PDB" id="3AHQ">
    <property type="method" value="X-ray"/>
    <property type="resolution" value="2.35 A"/>
    <property type="chains" value="A=22-468"/>
</dbReference>
<dbReference type="PDB" id="3AHR">
    <property type="method" value="X-ray"/>
    <property type="resolution" value="3.07 A"/>
    <property type="chains" value="A=22-468"/>
</dbReference>
<dbReference type="PDBsum" id="3AHQ"/>
<dbReference type="PDBsum" id="3AHR"/>
<dbReference type="SMR" id="Q96HE7"/>
<dbReference type="BioGRID" id="119025">
    <property type="interactions" value="136"/>
</dbReference>
<dbReference type="FunCoup" id="Q96HE7">
    <property type="interactions" value="2300"/>
</dbReference>
<dbReference type="IntAct" id="Q96HE7">
    <property type="interactions" value="35"/>
</dbReference>
<dbReference type="MINT" id="Q96HE7"/>
<dbReference type="STRING" id="9606.ENSP00000379042"/>
<dbReference type="BindingDB" id="Q96HE7"/>
<dbReference type="ChEMBL" id="CHEMBL1671609"/>
<dbReference type="TCDB" id="8.A.141.1.1">
    <property type="family name" value="the eros chaperone protein (eros) family"/>
</dbReference>
<dbReference type="GlyConnect" id="1225">
    <property type="glycosylation" value="4 N-Linked glycans (1 site)"/>
</dbReference>
<dbReference type="GlyCosmos" id="Q96HE7">
    <property type="glycosylation" value="2 sites, 4 glycans"/>
</dbReference>
<dbReference type="GlyGen" id="Q96HE7">
    <property type="glycosylation" value="3 sites, 24 N-linked glycans (1 site), 1 O-linked glycan (1 site)"/>
</dbReference>
<dbReference type="iPTMnet" id="Q96HE7"/>
<dbReference type="MetOSite" id="Q96HE7"/>
<dbReference type="PhosphoSitePlus" id="Q96HE7"/>
<dbReference type="SwissPalm" id="Q96HE7"/>
<dbReference type="BioMuta" id="ERO1A"/>
<dbReference type="DMDM" id="50400608"/>
<dbReference type="jPOST" id="Q96HE7"/>
<dbReference type="MassIVE" id="Q96HE7"/>
<dbReference type="PaxDb" id="9606-ENSP00000379042"/>
<dbReference type="PeptideAtlas" id="Q96HE7"/>
<dbReference type="PRIDE" id="Q96HE7"/>
<dbReference type="ProteomicsDB" id="76737"/>
<dbReference type="Pumba" id="Q96HE7"/>
<dbReference type="Antibodypedia" id="10791">
    <property type="antibodies" value="331 antibodies from 32 providers"/>
</dbReference>
<dbReference type="DNASU" id="30001"/>
<dbReference type="Ensembl" id="ENST00000395686.8">
    <property type="protein sequence ID" value="ENSP00000379042.3"/>
    <property type="gene ID" value="ENSG00000197930.13"/>
</dbReference>
<dbReference type="GeneID" id="30001"/>
<dbReference type="KEGG" id="hsa:30001"/>
<dbReference type="MANE-Select" id="ENST00000395686.8">
    <property type="protein sequence ID" value="ENSP00000379042.3"/>
    <property type="RefSeq nucleotide sequence ID" value="NM_014584.3"/>
    <property type="RefSeq protein sequence ID" value="NP_055399.1"/>
</dbReference>
<dbReference type="UCSC" id="uc001wzv.4">
    <property type="organism name" value="human"/>
</dbReference>
<dbReference type="AGR" id="HGNC:13280"/>
<dbReference type="CTD" id="30001"/>
<dbReference type="DisGeNET" id="30001"/>
<dbReference type="GeneCards" id="ERO1A"/>
<dbReference type="HGNC" id="HGNC:13280">
    <property type="gene designation" value="ERO1A"/>
</dbReference>
<dbReference type="HPA" id="ENSG00000197930">
    <property type="expression patterns" value="Tissue enhanced (esophagus)"/>
</dbReference>
<dbReference type="MIM" id="615435">
    <property type="type" value="gene"/>
</dbReference>
<dbReference type="neXtProt" id="NX_Q96HE7"/>
<dbReference type="OpenTargets" id="ENSG00000197930"/>
<dbReference type="PharmGKB" id="PA27862"/>
<dbReference type="VEuPathDB" id="HostDB:ENSG00000197930"/>
<dbReference type="eggNOG" id="KOG2608">
    <property type="taxonomic scope" value="Eukaryota"/>
</dbReference>
<dbReference type="GeneTree" id="ENSGT00390000007753"/>
<dbReference type="HOGENOM" id="CLU_023061_2_2_1"/>
<dbReference type="InParanoid" id="Q96HE7"/>
<dbReference type="OMA" id="PCGIRSE"/>
<dbReference type="OrthoDB" id="269384at2759"/>
<dbReference type="PAN-GO" id="Q96HE7">
    <property type="GO annotations" value="3 GO annotations based on evolutionary models"/>
</dbReference>
<dbReference type="PhylomeDB" id="Q96HE7"/>
<dbReference type="TreeFam" id="TF314471"/>
<dbReference type="BioCyc" id="MetaCyc:MONOMER66-43439"/>
<dbReference type="PathwayCommons" id="Q96HE7"/>
<dbReference type="Reactome" id="R-HSA-3299685">
    <property type="pathway name" value="Detoxification of Reactive Oxygen Species"/>
</dbReference>
<dbReference type="SignaLink" id="Q96HE7"/>
<dbReference type="SIGNOR" id="Q96HE7"/>
<dbReference type="BioGRID-ORCS" id="30001">
    <property type="hits" value="16 hits in 1155 CRISPR screens"/>
</dbReference>
<dbReference type="ChiTaRS" id="ERO1A">
    <property type="organism name" value="human"/>
</dbReference>
<dbReference type="EvolutionaryTrace" id="Q96HE7"/>
<dbReference type="GeneWiki" id="ERO1L"/>
<dbReference type="GenomeRNAi" id="30001"/>
<dbReference type="Pharos" id="Q96HE7">
    <property type="development level" value="Tbio"/>
</dbReference>
<dbReference type="PRO" id="PR:Q96HE7"/>
<dbReference type="Proteomes" id="UP000005640">
    <property type="component" value="Chromosome 14"/>
</dbReference>
<dbReference type="RNAct" id="Q96HE7">
    <property type="molecule type" value="protein"/>
</dbReference>
<dbReference type="Bgee" id="ENSG00000197930">
    <property type="expression patterns" value="Expressed in esophagus squamous epithelium and 192 other cell types or tissues"/>
</dbReference>
<dbReference type="ExpressionAtlas" id="Q96HE7">
    <property type="expression patterns" value="baseline and differential"/>
</dbReference>
<dbReference type="GO" id="GO:0030425">
    <property type="term" value="C:dendrite"/>
    <property type="evidence" value="ECO:0007669"/>
    <property type="project" value="UniProtKB-SubCell"/>
</dbReference>
<dbReference type="GO" id="GO:0005783">
    <property type="term" value="C:endoplasmic reticulum"/>
    <property type="evidence" value="ECO:0000314"/>
    <property type="project" value="UniProtKB"/>
</dbReference>
<dbReference type="GO" id="GO:0005788">
    <property type="term" value="C:endoplasmic reticulum lumen"/>
    <property type="evidence" value="ECO:0000304"/>
    <property type="project" value="Reactome"/>
</dbReference>
<dbReference type="GO" id="GO:0005789">
    <property type="term" value="C:endoplasmic reticulum membrane"/>
    <property type="evidence" value="ECO:0000318"/>
    <property type="project" value="GO_Central"/>
</dbReference>
<dbReference type="GO" id="GO:0005615">
    <property type="term" value="C:extracellular space"/>
    <property type="evidence" value="ECO:0000314"/>
    <property type="project" value="UniProtKB"/>
</dbReference>
<dbReference type="GO" id="GO:0005796">
    <property type="term" value="C:Golgi lumen"/>
    <property type="evidence" value="ECO:0000314"/>
    <property type="project" value="UniProtKB"/>
</dbReference>
<dbReference type="GO" id="GO:0043231">
    <property type="term" value="C:intracellular membrane-bounded organelle"/>
    <property type="evidence" value="ECO:0000304"/>
    <property type="project" value="ProtInc"/>
</dbReference>
<dbReference type="GO" id="GO:0016020">
    <property type="term" value="C:membrane"/>
    <property type="evidence" value="ECO:0007005"/>
    <property type="project" value="UniProtKB"/>
</dbReference>
<dbReference type="GO" id="GO:0071949">
    <property type="term" value="F:FAD binding"/>
    <property type="evidence" value="ECO:0007669"/>
    <property type="project" value="InterPro"/>
</dbReference>
<dbReference type="GO" id="GO:0016491">
    <property type="term" value="F:oxidoreductase activity"/>
    <property type="evidence" value="ECO:0000314"/>
    <property type="project" value="UniProtKB"/>
</dbReference>
<dbReference type="GO" id="GO:0015035">
    <property type="term" value="F:protein-disulfide reductase activity"/>
    <property type="evidence" value="ECO:0000318"/>
    <property type="project" value="GO_Central"/>
</dbReference>
<dbReference type="GO" id="GO:0016972">
    <property type="term" value="F:thiol oxidase activity"/>
    <property type="evidence" value="ECO:0007669"/>
    <property type="project" value="InterPro"/>
</dbReference>
<dbReference type="GO" id="GO:0050873">
    <property type="term" value="P:brown fat cell differentiation"/>
    <property type="evidence" value="ECO:0007669"/>
    <property type="project" value="Ensembl"/>
</dbReference>
<dbReference type="GO" id="GO:0045454">
    <property type="term" value="P:cell redox homeostasis"/>
    <property type="evidence" value="ECO:0000315"/>
    <property type="project" value="UniProtKB"/>
</dbReference>
<dbReference type="GO" id="GO:0071456">
    <property type="term" value="P:cellular response to hypoxia"/>
    <property type="evidence" value="ECO:0007669"/>
    <property type="project" value="Ensembl"/>
</dbReference>
<dbReference type="GO" id="GO:0051085">
    <property type="term" value="P:chaperone cofactor-dependent protein refolding"/>
    <property type="evidence" value="ECO:0000314"/>
    <property type="project" value="UniProtKB"/>
</dbReference>
<dbReference type="GO" id="GO:0030199">
    <property type="term" value="P:collagen fibril organization"/>
    <property type="evidence" value="ECO:0007669"/>
    <property type="project" value="Ensembl"/>
</dbReference>
<dbReference type="GO" id="GO:0030968">
    <property type="term" value="P:endoplasmic reticulum unfolded protein response"/>
    <property type="evidence" value="ECO:0007669"/>
    <property type="project" value="Ensembl"/>
</dbReference>
<dbReference type="GO" id="GO:0070059">
    <property type="term" value="P:intrinsic apoptotic signaling pathway in response to endoplasmic reticulum stress"/>
    <property type="evidence" value="ECO:0000250"/>
    <property type="project" value="UniProtKB"/>
</dbReference>
<dbReference type="GO" id="GO:0019852">
    <property type="term" value="P:L-ascorbic acid metabolic process"/>
    <property type="evidence" value="ECO:0007669"/>
    <property type="project" value="Ensembl"/>
</dbReference>
<dbReference type="GO" id="GO:0006457">
    <property type="term" value="P:protein folding"/>
    <property type="evidence" value="ECO:0000315"/>
    <property type="project" value="UniProtKB"/>
</dbReference>
<dbReference type="GO" id="GO:0034975">
    <property type="term" value="P:protein folding in endoplasmic reticulum"/>
    <property type="evidence" value="ECO:0000318"/>
    <property type="project" value="GO_Central"/>
</dbReference>
<dbReference type="GO" id="GO:0036211">
    <property type="term" value="P:protein modification process"/>
    <property type="evidence" value="ECO:0000304"/>
    <property type="project" value="ProtInc"/>
</dbReference>
<dbReference type="GO" id="GO:0051209">
    <property type="term" value="P:release of sequestered calcium ion into cytosol"/>
    <property type="evidence" value="ECO:0000250"/>
    <property type="project" value="UniProtKB"/>
</dbReference>
<dbReference type="GO" id="GO:0034976">
    <property type="term" value="P:response to endoplasmic reticulum stress"/>
    <property type="evidence" value="ECO:0000250"/>
    <property type="project" value="UniProtKB"/>
</dbReference>
<dbReference type="GO" id="GO:0006979">
    <property type="term" value="P:response to oxidative stress"/>
    <property type="evidence" value="ECO:0007669"/>
    <property type="project" value="Ensembl"/>
</dbReference>
<dbReference type="GO" id="GO:0009266">
    <property type="term" value="P:response to temperature stimulus"/>
    <property type="evidence" value="ECO:0000304"/>
    <property type="project" value="ProtInc"/>
</dbReference>
<dbReference type="GO" id="GO:0007519">
    <property type="term" value="P:skeletal muscle tissue development"/>
    <property type="evidence" value="ECO:0007669"/>
    <property type="project" value="Ensembl"/>
</dbReference>
<dbReference type="GO" id="GO:0007179">
    <property type="term" value="P:transforming growth factor beta receptor signaling pathway"/>
    <property type="evidence" value="ECO:0007669"/>
    <property type="project" value="Ensembl"/>
</dbReference>
<dbReference type="InterPro" id="IPR007266">
    <property type="entry name" value="Ero1"/>
</dbReference>
<dbReference type="InterPro" id="IPR037192">
    <property type="entry name" value="ERO1-like_sf"/>
</dbReference>
<dbReference type="PANTHER" id="PTHR12613:SF1">
    <property type="entry name" value="ERO1-LIKE PROTEIN ALPHA"/>
    <property type="match status" value="1"/>
</dbReference>
<dbReference type="PANTHER" id="PTHR12613">
    <property type="entry name" value="ERO1-RELATED"/>
    <property type="match status" value="1"/>
</dbReference>
<dbReference type="Pfam" id="PF04137">
    <property type="entry name" value="ERO1"/>
    <property type="match status" value="1"/>
</dbReference>
<dbReference type="PIRSF" id="PIRSF017205">
    <property type="entry name" value="ERO1"/>
    <property type="match status" value="1"/>
</dbReference>
<dbReference type="SUPFAM" id="SSF110019">
    <property type="entry name" value="ERO1-like"/>
    <property type="match status" value="1"/>
</dbReference>
<organism>
    <name type="scientific">Homo sapiens</name>
    <name type="common">Human</name>
    <dbReference type="NCBI Taxonomy" id="9606"/>
    <lineage>
        <taxon>Eukaryota</taxon>
        <taxon>Metazoa</taxon>
        <taxon>Chordata</taxon>
        <taxon>Craniata</taxon>
        <taxon>Vertebrata</taxon>
        <taxon>Euteleostomi</taxon>
        <taxon>Mammalia</taxon>
        <taxon>Eutheria</taxon>
        <taxon>Euarchontoglires</taxon>
        <taxon>Primates</taxon>
        <taxon>Haplorrhini</taxon>
        <taxon>Catarrhini</taxon>
        <taxon>Hominidae</taxon>
        <taxon>Homo</taxon>
    </lineage>
</organism>
<evidence type="ECO:0000250" key="1"/>
<evidence type="ECO:0000250" key="2">
    <source>
        <dbReference type="UniProtKB" id="Q8R180"/>
    </source>
</evidence>
<evidence type="ECO:0000250" key="3">
    <source>
        <dbReference type="UniProtKB" id="Q8R4A1"/>
    </source>
</evidence>
<evidence type="ECO:0000255" key="4"/>
<evidence type="ECO:0000269" key="5">
    <source>
    </source>
</evidence>
<evidence type="ECO:0000269" key="6">
    <source>
    </source>
</evidence>
<evidence type="ECO:0000269" key="7">
    <source>
    </source>
</evidence>
<evidence type="ECO:0000269" key="8">
    <source>
    </source>
</evidence>
<evidence type="ECO:0000269" key="9">
    <source>
    </source>
</evidence>
<evidence type="ECO:0000269" key="10">
    <source>
    </source>
</evidence>
<evidence type="ECO:0000269" key="11">
    <source>
    </source>
</evidence>
<evidence type="ECO:0000269" key="12">
    <source>
    </source>
</evidence>
<evidence type="ECO:0000269" key="13">
    <source>
    </source>
</evidence>
<evidence type="ECO:0000269" key="14">
    <source>
    </source>
</evidence>
<evidence type="ECO:0000269" key="15">
    <source>
    </source>
</evidence>
<evidence type="ECO:0000269" key="16">
    <source>
    </source>
</evidence>
<evidence type="ECO:0000269" key="17">
    <source>
    </source>
</evidence>
<evidence type="ECO:0000269" key="18">
    <source>
    </source>
</evidence>
<evidence type="ECO:0000269" key="19">
    <source>
    </source>
</evidence>
<evidence type="ECO:0000269" key="20">
    <source>
    </source>
</evidence>
<evidence type="ECO:0000269" key="21">
    <source>
    </source>
</evidence>
<evidence type="ECO:0000269" key="22">
    <source>
    </source>
</evidence>
<evidence type="ECO:0000269" key="23">
    <source>
    </source>
</evidence>
<evidence type="ECO:0000305" key="24"/>
<evidence type="ECO:0000312" key="25">
    <source>
        <dbReference type="HGNC" id="HGNC:13280"/>
    </source>
</evidence>
<evidence type="ECO:0007744" key="26">
    <source>
        <dbReference type="PDB" id="3AHQ"/>
    </source>
</evidence>
<evidence type="ECO:0007744" key="27">
    <source>
        <dbReference type="PDB" id="3AHR"/>
    </source>
</evidence>
<evidence type="ECO:0007744" key="28">
    <source>
    </source>
</evidence>
<evidence type="ECO:0007744" key="29">
    <source>
    </source>
</evidence>
<evidence type="ECO:0007744" key="30">
    <source>
    </source>
</evidence>
<evidence type="ECO:0007829" key="31">
    <source>
        <dbReference type="PDB" id="3AHQ"/>
    </source>
</evidence>
<evidence type="ECO:0007829" key="32">
    <source>
        <dbReference type="PDB" id="3AHR"/>
    </source>
</evidence>
<protein>
    <recommendedName>
        <fullName>ERO1-like protein alpha</fullName>
        <shortName>ERO1-L</shortName>
        <shortName>ERO1-L-alpha</shortName>
        <ecNumber evidence="23">1.8.4.-</ecNumber>
    </recommendedName>
    <alternativeName>
        <fullName>Endoplasmic oxidoreductin-1-like protein</fullName>
    </alternativeName>
    <alternativeName>
        <fullName evidence="25">Endoplasmic reticulum oxidoreductase alpha</fullName>
    </alternativeName>
    <alternativeName>
        <fullName>Oxidoreductin-1-L-alpha</fullName>
    </alternativeName>
</protein>
<reference key="1">
    <citation type="journal article" date="2000" name="J. Biol. Chem.">
        <title>ERO1-L, a human protein that favors disulfide bond formation in the endoplasmic reticulum.</title>
        <authorList>
            <person name="Cabibbo A."/>
            <person name="Pagani M."/>
            <person name="Fabbri M."/>
            <person name="Rocchi M."/>
            <person name="Farmery M.R."/>
            <person name="Bulleid N.J."/>
            <person name="Sitia R."/>
        </authorList>
    </citation>
    <scope>NUCLEOTIDE SEQUENCE [MRNA]</scope>
    <scope>FUNCTION</scope>
    <scope>SUBCELLULAR LOCATION</scope>
    <scope>GLYCOSYLATION</scope>
    <scope>MUTAGENESIS OF CYS-391 AND CYS-394</scope>
    <source>
        <tissue>Embryonic carcinoma</tissue>
    </source>
</reference>
<reference key="2">
    <citation type="journal article" date="2003" name="Genome Res.">
        <title>The secreted protein discovery initiative (SPDI), a large-scale effort to identify novel human secreted and transmembrane proteins: a bioinformatics assessment.</title>
        <authorList>
            <person name="Clark H.F."/>
            <person name="Gurney A.L."/>
            <person name="Abaya E."/>
            <person name="Baker K."/>
            <person name="Baldwin D.T."/>
            <person name="Brush J."/>
            <person name="Chen J."/>
            <person name="Chow B."/>
            <person name="Chui C."/>
            <person name="Crowley C."/>
            <person name="Currell B."/>
            <person name="Deuel B."/>
            <person name="Dowd P."/>
            <person name="Eaton D."/>
            <person name="Foster J.S."/>
            <person name="Grimaldi C."/>
            <person name="Gu Q."/>
            <person name="Hass P.E."/>
            <person name="Heldens S."/>
            <person name="Huang A."/>
            <person name="Kim H.S."/>
            <person name="Klimowski L."/>
            <person name="Jin Y."/>
            <person name="Johnson S."/>
            <person name="Lee J."/>
            <person name="Lewis L."/>
            <person name="Liao D."/>
            <person name="Mark M.R."/>
            <person name="Robbie E."/>
            <person name="Sanchez C."/>
            <person name="Schoenfeld J."/>
            <person name="Seshagiri S."/>
            <person name="Simmons L."/>
            <person name="Singh J."/>
            <person name="Smith V."/>
            <person name="Stinson J."/>
            <person name="Vagts A."/>
            <person name="Vandlen R.L."/>
            <person name="Watanabe C."/>
            <person name="Wieand D."/>
            <person name="Woods K."/>
            <person name="Xie M.-H."/>
            <person name="Yansura D.G."/>
            <person name="Yi S."/>
            <person name="Yu G."/>
            <person name="Yuan J."/>
            <person name="Zhang M."/>
            <person name="Zhang Z."/>
            <person name="Goddard A.D."/>
            <person name="Wood W.I."/>
            <person name="Godowski P.J."/>
            <person name="Gray A.M."/>
        </authorList>
    </citation>
    <scope>NUCLEOTIDE SEQUENCE [LARGE SCALE MRNA]</scope>
</reference>
<reference key="3">
    <citation type="journal article" date="2004" name="Nat. Genet.">
        <title>Complete sequencing and characterization of 21,243 full-length human cDNAs.</title>
        <authorList>
            <person name="Ota T."/>
            <person name="Suzuki Y."/>
            <person name="Nishikawa T."/>
            <person name="Otsuki T."/>
            <person name="Sugiyama T."/>
            <person name="Irie R."/>
            <person name="Wakamatsu A."/>
            <person name="Hayashi K."/>
            <person name="Sato H."/>
            <person name="Nagai K."/>
            <person name="Kimura K."/>
            <person name="Makita H."/>
            <person name="Sekine M."/>
            <person name="Obayashi M."/>
            <person name="Nishi T."/>
            <person name="Shibahara T."/>
            <person name="Tanaka T."/>
            <person name="Ishii S."/>
            <person name="Yamamoto J."/>
            <person name="Saito K."/>
            <person name="Kawai Y."/>
            <person name="Isono Y."/>
            <person name="Nakamura Y."/>
            <person name="Nagahari K."/>
            <person name="Murakami K."/>
            <person name="Yasuda T."/>
            <person name="Iwayanagi T."/>
            <person name="Wagatsuma M."/>
            <person name="Shiratori A."/>
            <person name="Sudo H."/>
            <person name="Hosoiri T."/>
            <person name="Kaku Y."/>
            <person name="Kodaira H."/>
            <person name="Kondo H."/>
            <person name="Sugawara M."/>
            <person name="Takahashi M."/>
            <person name="Kanda K."/>
            <person name="Yokoi T."/>
            <person name="Furuya T."/>
            <person name="Kikkawa E."/>
            <person name="Omura Y."/>
            <person name="Abe K."/>
            <person name="Kamihara K."/>
            <person name="Katsuta N."/>
            <person name="Sato K."/>
            <person name="Tanikawa M."/>
            <person name="Yamazaki M."/>
            <person name="Ninomiya K."/>
            <person name="Ishibashi T."/>
            <person name="Yamashita H."/>
            <person name="Murakawa K."/>
            <person name="Fujimori K."/>
            <person name="Tanai H."/>
            <person name="Kimata M."/>
            <person name="Watanabe M."/>
            <person name="Hiraoka S."/>
            <person name="Chiba Y."/>
            <person name="Ishida S."/>
            <person name="Ono Y."/>
            <person name="Takiguchi S."/>
            <person name="Watanabe S."/>
            <person name="Yosida M."/>
            <person name="Hotuta T."/>
            <person name="Kusano J."/>
            <person name="Kanehori K."/>
            <person name="Takahashi-Fujii A."/>
            <person name="Hara H."/>
            <person name="Tanase T.-O."/>
            <person name="Nomura Y."/>
            <person name="Togiya S."/>
            <person name="Komai F."/>
            <person name="Hara R."/>
            <person name="Takeuchi K."/>
            <person name="Arita M."/>
            <person name="Imose N."/>
            <person name="Musashino K."/>
            <person name="Yuuki H."/>
            <person name="Oshima A."/>
            <person name="Sasaki N."/>
            <person name="Aotsuka S."/>
            <person name="Yoshikawa Y."/>
            <person name="Matsunawa H."/>
            <person name="Ichihara T."/>
            <person name="Shiohata N."/>
            <person name="Sano S."/>
            <person name="Moriya S."/>
            <person name="Momiyama H."/>
            <person name="Satoh N."/>
            <person name="Takami S."/>
            <person name="Terashima Y."/>
            <person name="Suzuki O."/>
            <person name="Nakagawa S."/>
            <person name="Senoh A."/>
            <person name="Mizoguchi H."/>
            <person name="Goto Y."/>
            <person name="Shimizu F."/>
            <person name="Wakebe H."/>
            <person name="Hishigaki H."/>
            <person name="Watanabe T."/>
            <person name="Sugiyama A."/>
            <person name="Takemoto M."/>
            <person name="Kawakami B."/>
            <person name="Yamazaki M."/>
            <person name="Watanabe K."/>
            <person name="Kumagai A."/>
            <person name="Itakura S."/>
            <person name="Fukuzumi Y."/>
            <person name="Fujimori Y."/>
            <person name="Komiyama M."/>
            <person name="Tashiro H."/>
            <person name="Tanigami A."/>
            <person name="Fujiwara T."/>
            <person name="Ono T."/>
            <person name="Yamada K."/>
            <person name="Fujii Y."/>
            <person name="Ozaki K."/>
            <person name="Hirao M."/>
            <person name="Ohmori Y."/>
            <person name="Kawabata A."/>
            <person name="Hikiji T."/>
            <person name="Kobatake N."/>
            <person name="Inagaki H."/>
            <person name="Ikema Y."/>
            <person name="Okamoto S."/>
            <person name="Okitani R."/>
            <person name="Kawakami T."/>
            <person name="Noguchi S."/>
            <person name="Itoh T."/>
            <person name="Shigeta K."/>
            <person name="Senba T."/>
            <person name="Matsumura K."/>
            <person name="Nakajima Y."/>
            <person name="Mizuno T."/>
            <person name="Morinaga M."/>
            <person name="Sasaki M."/>
            <person name="Togashi T."/>
            <person name="Oyama M."/>
            <person name="Hata H."/>
            <person name="Watanabe M."/>
            <person name="Komatsu T."/>
            <person name="Mizushima-Sugano J."/>
            <person name="Satoh T."/>
            <person name="Shirai Y."/>
            <person name="Takahashi Y."/>
            <person name="Nakagawa K."/>
            <person name="Okumura K."/>
            <person name="Nagase T."/>
            <person name="Nomura N."/>
            <person name="Kikuchi H."/>
            <person name="Masuho Y."/>
            <person name="Yamashita R."/>
            <person name="Nakai K."/>
            <person name="Yada T."/>
            <person name="Nakamura Y."/>
            <person name="Ohara O."/>
            <person name="Isogai T."/>
            <person name="Sugano S."/>
        </authorList>
    </citation>
    <scope>NUCLEOTIDE SEQUENCE [LARGE SCALE MRNA]</scope>
    <source>
        <tissue>Trachea</tissue>
    </source>
</reference>
<reference key="4">
    <citation type="journal article" date="2003" name="Nature">
        <title>The DNA sequence and analysis of human chromosome 14.</title>
        <authorList>
            <person name="Heilig R."/>
            <person name="Eckenberg R."/>
            <person name="Petit J.-L."/>
            <person name="Fonknechten N."/>
            <person name="Da Silva C."/>
            <person name="Cattolico L."/>
            <person name="Levy M."/>
            <person name="Barbe V."/>
            <person name="De Berardinis V."/>
            <person name="Ureta-Vidal A."/>
            <person name="Pelletier E."/>
            <person name="Vico V."/>
            <person name="Anthouard V."/>
            <person name="Rowen L."/>
            <person name="Madan A."/>
            <person name="Qin S."/>
            <person name="Sun H."/>
            <person name="Du H."/>
            <person name="Pepin K."/>
            <person name="Artiguenave F."/>
            <person name="Robert C."/>
            <person name="Cruaud C."/>
            <person name="Bruels T."/>
            <person name="Jaillon O."/>
            <person name="Friedlander L."/>
            <person name="Samson G."/>
            <person name="Brottier P."/>
            <person name="Cure S."/>
            <person name="Segurens B."/>
            <person name="Aniere F."/>
            <person name="Samain S."/>
            <person name="Crespeau H."/>
            <person name="Abbasi N."/>
            <person name="Aiach N."/>
            <person name="Boscus D."/>
            <person name="Dickhoff R."/>
            <person name="Dors M."/>
            <person name="Dubois I."/>
            <person name="Friedman C."/>
            <person name="Gouyvenoux M."/>
            <person name="James R."/>
            <person name="Madan A."/>
            <person name="Mairey-Estrada B."/>
            <person name="Mangenot S."/>
            <person name="Martins N."/>
            <person name="Menard M."/>
            <person name="Oztas S."/>
            <person name="Ratcliffe A."/>
            <person name="Shaffer T."/>
            <person name="Trask B."/>
            <person name="Vacherie B."/>
            <person name="Bellemere C."/>
            <person name="Belser C."/>
            <person name="Besnard-Gonnet M."/>
            <person name="Bartol-Mavel D."/>
            <person name="Boutard M."/>
            <person name="Briez-Silla S."/>
            <person name="Combette S."/>
            <person name="Dufosse-Laurent V."/>
            <person name="Ferron C."/>
            <person name="Lechaplais C."/>
            <person name="Louesse C."/>
            <person name="Muselet D."/>
            <person name="Magdelenat G."/>
            <person name="Pateau E."/>
            <person name="Petit E."/>
            <person name="Sirvain-Trukniewicz P."/>
            <person name="Trybou A."/>
            <person name="Vega-Czarny N."/>
            <person name="Bataille E."/>
            <person name="Bluet E."/>
            <person name="Bordelais I."/>
            <person name="Dubois M."/>
            <person name="Dumont C."/>
            <person name="Guerin T."/>
            <person name="Haffray S."/>
            <person name="Hammadi R."/>
            <person name="Muanga J."/>
            <person name="Pellouin V."/>
            <person name="Robert D."/>
            <person name="Wunderle E."/>
            <person name="Gauguet G."/>
            <person name="Roy A."/>
            <person name="Sainte-Marthe L."/>
            <person name="Verdier J."/>
            <person name="Verdier-Discala C."/>
            <person name="Hillier L.W."/>
            <person name="Fulton L."/>
            <person name="McPherson J."/>
            <person name="Matsuda F."/>
            <person name="Wilson R."/>
            <person name="Scarpelli C."/>
            <person name="Gyapay G."/>
            <person name="Wincker P."/>
            <person name="Saurin W."/>
            <person name="Quetier F."/>
            <person name="Waterston R."/>
            <person name="Hood L."/>
            <person name="Weissenbach J."/>
        </authorList>
    </citation>
    <scope>NUCLEOTIDE SEQUENCE [LARGE SCALE GENOMIC DNA]</scope>
</reference>
<reference key="5">
    <citation type="journal article" date="2004" name="Genome Res.">
        <title>The status, quality, and expansion of the NIH full-length cDNA project: the Mammalian Gene Collection (MGC).</title>
        <authorList>
            <consortium name="The MGC Project Team"/>
        </authorList>
    </citation>
    <scope>NUCLEOTIDE SEQUENCE [LARGE SCALE MRNA]</scope>
    <source>
        <tissue>Eye</tissue>
    </source>
</reference>
<reference key="6">
    <citation type="journal article" date="2001" name="FEBS Lett.">
        <title>The C-terminal domain of yeast Ero1p mediates membrane localization and is essential for function.</title>
        <authorList>
            <person name="Pagani M."/>
            <person name="Pilati S."/>
            <person name="Bertoli G."/>
            <person name="Valsasina B."/>
            <person name="Sitia R."/>
        </authorList>
    </citation>
    <scope>PROTEIN SEQUENCE OF N-TERMINUS</scope>
    <scope>IDENTIFICATION BY MASS SPECTROMETRY</scope>
</reference>
<reference key="7">
    <citation type="journal article" date="2002" name="EMBO J.">
        <title>ERp44, a novel endoplasmic reticulum folding assistant of the thioredoxin family.</title>
        <authorList>
            <person name="Anelli T."/>
            <person name="Alessio M."/>
            <person name="Mezghrani A."/>
            <person name="Simmen T."/>
            <person name="Talamo F."/>
            <person name="Bachi A."/>
            <person name="Sitia R."/>
        </authorList>
    </citation>
    <scope>PROTEIN SEQUENCE OF 68-75; 288-299 AND 420-437</scope>
    <scope>INTERACTION WITH ERP44</scope>
    <scope>IDENTIFICATION BY MASS SPECTROMETRY</scope>
</reference>
<reference key="8">
    <citation type="journal article" date="2000" name="EMBO J.">
        <title>The CXXCXXC motif determines the folding, structure and stability of human Ero1-Lalpha.</title>
        <authorList>
            <person name="Benham A.M."/>
            <person name="Cabibbo A."/>
            <person name="Fassio A."/>
            <person name="Bulleid N."/>
            <person name="Sitia R."/>
            <person name="Braakman I."/>
        </authorList>
    </citation>
    <scope>FUNCTION</scope>
    <scope>GLYCOSYLATION</scope>
    <scope>MUTAGENESIS OF CYS-391; CYS-394 AND CYS-397</scope>
</reference>
<reference key="9">
    <citation type="journal article" date="2000" name="J. Biol. Chem.">
        <title>Endoplasmic reticulum oxidoreductin 1-lbeta (ERO1-Lbeta), a human gene induced in the course of the unfolded protein response.</title>
        <authorList>
            <person name="Pagani M."/>
            <person name="Fabbri M."/>
            <person name="Benedetti C."/>
            <person name="Fassio A."/>
            <person name="Pilati S."/>
            <person name="Bulleid N.J."/>
            <person name="Cabibbo A."/>
            <person name="Sitia R."/>
        </authorList>
    </citation>
    <scope>TISSUE SPECIFICITY</scope>
</reference>
<reference key="10">
    <citation type="journal article" date="2001" name="EMBO J.">
        <title>Manipulation of oxidative protein folding and PDI redox state in mammalian cells.</title>
        <authorList>
            <person name="Mezghrani A."/>
            <person name="Fassio A."/>
            <person name="Benham A."/>
            <person name="Simmen T."/>
            <person name="Braakman I."/>
            <person name="Sitia R."/>
        </authorList>
    </citation>
    <scope>FUNCTION</scope>
    <scope>POTENTIAL HOMODIMERIZATION</scope>
    <scope>ASSOCIATION WITH P4HB</scope>
    <scope>LACK OF ASSOCIATION WITH GRP58</scope>
    <scope>MUTAGENESIS OF CYS-394 AND CYS-397</scope>
</reference>
<reference key="11">
    <citation type="journal article" date="2002" name="J. Cell Biol.">
        <title>Unfolded cholera toxin is transferred to the ER membrane and released from protein disulfide isomerase upon oxidation by Ero1.</title>
        <authorList>
            <person name="Tsai B."/>
            <person name="Rapoport T.A."/>
        </authorList>
    </citation>
    <scope>FUNCTION</scope>
</reference>
<reference key="12">
    <citation type="journal article" date="2003" name="Eur. J. Biochem.">
        <title>The cellular oxygen tension regulates expression of the endoplasmic oxidoreductase ERO1-Lalpha.</title>
        <authorList>
            <person name="Gess B."/>
            <person name="Hofbauer K.H."/>
            <person name="Wenger R.H."/>
            <person name="Lohaus C."/>
            <person name="Meyer H.E."/>
            <person name="Kurtz A."/>
        </authorList>
    </citation>
    <scope>INDUCTION</scope>
</reference>
<reference key="13">
    <citation type="journal article" date="2003" name="EMBO J.">
        <title>Thiol-mediated protein retention in the endoplasmic reticulum: the role of ERp44.</title>
        <authorList>
            <person name="Anelli T."/>
            <person name="Alessio M."/>
            <person name="Bachi A."/>
            <person name="Bergamelli L."/>
            <person name="Bertoli G."/>
            <person name="Camerini S."/>
            <person name="Mezghrani A."/>
            <person name="Ruffato E."/>
            <person name="Simmen T."/>
            <person name="Sitia R."/>
        </authorList>
    </citation>
    <scope>SUBCELLULAR LOCATION</scope>
</reference>
<reference key="14">
    <citation type="journal article" date="2004" name="J. Biol. Chem.">
        <title>Two conserved cysteine triads in human Ero1alpha cooperate forefficient disulfide bond formation in the ER.</title>
        <authorList>
            <person name="Bertoli G."/>
            <person name="Simmen T."/>
            <person name="Anelli T."/>
            <person name="Nerini Molteni S."/>
            <person name="Fesce R."/>
            <person name="Sitia R."/>
        </authorList>
    </citation>
    <scope>MUTAGENESIS OF CYS-85; CYS-94; CYS-99; CYS-104; CYS-131; CYS-166; CYS-208; CYS-241; ASN-280; ASN-384; CYS-391; CYS-394 AND CYS-397</scope>
</reference>
<reference key="15">
    <citation type="journal article" date="2004" name="J. Biol. Chem.">
        <title>Glutathione limits Ero1-dependent oxidation in the endoplasmic reticulum.</title>
        <authorList>
            <person name="Nerini Molteni S."/>
            <person name="Fassio A."/>
            <person name="Ciriolo M.R."/>
            <person name="Filomeni G."/>
            <person name="Pasqualetto E."/>
            <person name="Fagioli C."/>
            <person name="Sitia R."/>
        </authorList>
    </citation>
    <scope>ACTIVITY REGULATION</scope>
</reference>
<reference key="16">
    <citation type="journal article" date="2005" name="J. Biol. Chem.">
        <title>PDILT, a divergent testis-specific protein disulfide isomerase with a non-classical SXXC motif that engages in disulfide-dependent interactions in the endoplasmic reticulum.</title>
        <authorList>
            <person name="van Lith M."/>
            <person name="Hartigan N."/>
            <person name="Hatch J."/>
            <person name="Benham A.M."/>
        </authorList>
    </citation>
    <scope>INTERACTION WITH PDILT</scope>
</reference>
<reference key="17">
    <citation type="journal article" date="2008" name="EMBO J.">
        <title>A novel disulphide switch mechanism in Ero1alpha balances ER oxidation in human cells.</title>
        <authorList>
            <person name="Appenzeller-Herzog C."/>
            <person name="Riemer J."/>
            <person name="Christensen B."/>
            <person name="Soerensen E.S."/>
            <person name="Ellgaard L."/>
        </authorList>
    </citation>
    <scope>FUNCTION</scope>
    <scope>ACTIVITY REGULATION</scope>
    <scope>DISULFIDE BONDS</scope>
    <scope>MUTAGENESIS OF CYS-131 AND CYS-394</scope>
    <scope>IDENTIFICATION BY MASS SPECTROMETRY</scope>
</reference>
<reference key="18">
    <citation type="journal article" date="2008" name="EMBO J.">
        <title>Low reduction potential of Ero1alpha regulatory disulphides ensures tight control of substrate oxidation.</title>
        <authorList>
            <person name="Baker K.M."/>
            <person name="Chakravarthi S."/>
            <person name="Langton K.P."/>
            <person name="Sheppard A.M."/>
            <person name="Lu H."/>
            <person name="Bulleid N.J."/>
        </authorList>
    </citation>
    <scope>FUNCTION</scope>
    <scope>ACTIVITY REGULATION</scope>
    <scope>COFACTOR</scope>
    <scope>SUBUNIT</scope>
    <scope>DISULFIDE BONDS</scope>
    <scope>MUTAGENESIS OF CYS-85; CYS-94; CYS-99; CYS-104; CYS-131; CYS-166; CYS-208 AND CYS-241</scope>
</reference>
<reference key="19">
    <citation type="journal article" date="2009" name="J. Proteome Res.">
        <title>Glycoproteomics analysis of human liver tissue by combination of multiple enzyme digestion and hydrazide chemistry.</title>
        <authorList>
            <person name="Chen R."/>
            <person name="Jiang X."/>
            <person name="Sun D."/>
            <person name="Han G."/>
            <person name="Wang F."/>
            <person name="Ye M."/>
            <person name="Wang L."/>
            <person name="Zou H."/>
        </authorList>
    </citation>
    <scope>GLYCOSYLATION [LARGE SCALE ANALYSIS] AT ASN-280</scope>
    <source>
        <tissue>Liver</tissue>
    </source>
</reference>
<reference key="20">
    <citation type="journal article" date="2010" name="Sci. Signal.">
        <title>Quantitative phosphoproteomics reveals widespread full phosphorylation site occupancy during mitosis.</title>
        <authorList>
            <person name="Olsen J.V."/>
            <person name="Vermeulen M."/>
            <person name="Santamaria A."/>
            <person name="Kumar C."/>
            <person name="Miller M.L."/>
            <person name="Jensen L.J."/>
            <person name="Gnad F."/>
            <person name="Cox J."/>
            <person name="Jensen T.S."/>
            <person name="Nigg E.A."/>
            <person name="Brunak S."/>
            <person name="Mann M."/>
        </authorList>
    </citation>
    <scope>PHOSPHORYLATION [LARGE SCALE ANALYSIS] AT SER-143</scope>
    <scope>IDENTIFICATION BY MASS SPECTROMETRY [LARGE SCALE ANALYSIS]</scope>
    <source>
        <tissue>Cervix carcinoma</tissue>
    </source>
</reference>
<reference key="21">
    <citation type="journal article" date="2011" name="BMC Syst. Biol.">
        <title>Initial characterization of the human central proteome.</title>
        <authorList>
            <person name="Burkard T.R."/>
            <person name="Planyavsky M."/>
            <person name="Kaupe I."/>
            <person name="Breitwieser F.P."/>
            <person name="Buerckstuemmer T."/>
            <person name="Bennett K.L."/>
            <person name="Superti-Furga G."/>
            <person name="Colinge J."/>
        </authorList>
    </citation>
    <scope>IDENTIFICATION BY MASS SPECTROMETRY [LARGE SCALE ANALYSIS]</scope>
</reference>
<reference key="22">
    <citation type="journal article" date="2011" name="Biochem. J.">
        <title>The endoplasmic reticulum sulfhydryl oxidase Ero1beta drives efficient oxidative protein folding with loose regulation.</title>
        <authorList>
            <person name="Wang L."/>
            <person name="Zhu L."/>
            <person name="Wang C.C."/>
        </authorList>
    </citation>
    <scope>MUTAGENESIS OF PHE-395</scope>
</reference>
<reference key="23">
    <citation type="journal article" date="2012" name="J. Biol. Chem.">
        <title>Hyperactivity of the Ero1alpha oxidase elicits endoplasmic reticulum stress but no broad antioxidant response.</title>
        <authorList>
            <person name="Hansen H.G."/>
            <person name="Schmidt J.D."/>
            <person name="Soltoft C.L."/>
            <person name="Ramming T."/>
            <person name="Geertz-Hansen H.M."/>
            <person name="Christensen B."/>
            <person name="Sorensen E.S."/>
            <person name="Juncker A.S."/>
            <person name="Appenzeller-Herzog C."/>
            <person name="Ellgaard L."/>
        </authorList>
    </citation>
    <scope>FUNCTION</scope>
    <scope>DISULFIDE BONDS</scope>
    <scope>MUTAGENESIS OF CYS-104 AND CYS-131</scope>
</reference>
<reference key="24">
    <citation type="journal article" date="2013" name="J. Proteome Res.">
        <title>Toward a comprehensive characterization of a human cancer cell phosphoproteome.</title>
        <authorList>
            <person name="Zhou H."/>
            <person name="Di Palma S."/>
            <person name="Preisinger C."/>
            <person name="Peng M."/>
            <person name="Polat A.N."/>
            <person name="Heck A.J."/>
            <person name="Mohammed S."/>
        </authorList>
    </citation>
    <scope>PHOSPHORYLATION [LARGE SCALE ANALYSIS] AT SER-143</scope>
    <scope>IDENTIFICATION BY MASS SPECTROMETRY [LARGE SCALE ANALYSIS]</scope>
    <source>
        <tissue>Erythroleukemia</tissue>
    </source>
</reference>
<reference key="25">
    <citation type="journal article" date="2014" name="J. Proteomics">
        <title>An enzyme assisted RP-RPLC approach for in-depth analysis of human liver phosphoproteome.</title>
        <authorList>
            <person name="Bian Y."/>
            <person name="Song C."/>
            <person name="Cheng K."/>
            <person name="Dong M."/>
            <person name="Wang F."/>
            <person name="Huang J."/>
            <person name="Sun D."/>
            <person name="Wang L."/>
            <person name="Ye M."/>
            <person name="Zou H."/>
        </authorList>
    </citation>
    <scope>PHOSPHORYLATION [LARGE SCALE ANALYSIS] AT SER-106</scope>
    <scope>IDENTIFICATION BY MASS SPECTROMETRY [LARGE SCALE ANALYSIS]</scope>
    <source>
        <tissue>Liver</tissue>
    </source>
</reference>
<reference key="26">
    <citation type="journal article" date="2015" name="Proteomics">
        <title>N-terminome analysis of the human mitochondrial proteome.</title>
        <authorList>
            <person name="Vaca Jacome A.S."/>
            <person name="Rabilloud T."/>
            <person name="Schaeffer-Reiss C."/>
            <person name="Rompais M."/>
            <person name="Ayoub D."/>
            <person name="Lane L."/>
            <person name="Bairoch A."/>
            <person name="Van Dorsselaer A."/>
            <person name="Carapito C."/>
        </authorList>
    </citation>
    <scope>IDENTIFICATION BY MASS SPECTROMETRY [LARGE SCALE ANALYSIS]</scope>
</reference>
<reference key="27">
    <citation type="journal article" date="2018" name="EMBO J.">
        <title>Secretory kinase Fam20C tunes endoplasmic reticulum redox state via phosphorylation of Ero1alpha.</title>
        <authorList>
            <person name="Zhang J."/>
            <person name="Zhu Q."/>
            <person name="Wang X."/>
            <person name="Yu J."/>
            <person name="Chen X."/>
            <person name="Wang J."/>
            <person name="Wang X."/>
            <person name="Xiao J."/>
            <person name="Wang C.C."/>
            <person name="Wang L."/>
        </authorList>
    </citation>
    <scope>FUNCTION</scope>
    <scope>CATALYTIC ACTIVITY</scope>
    <scope>INTERACTION WITH ERP44</scope>
    <scope>SUBCELLULAR LOCATION</scope>
    <scope>PHOSPHORYLATION AT SER-145</scope>
    <scope>MUTAGENESIS OF SER-145</scope>
    <scope>IDENTIFICATION BY MASS SPECTROMETRY</scope>
</reference>
<reference key="28">
    <citation type="journal article" date="2010" name="EMBO J.">
        <title>Crystal structures of human Ero1alpha reveal the mechanisms of regulated and targeted oxidation of PDI.</title>
        <authorList>
            <person name="Inaba K."/>
            <person name="Masui S."/>
            <person name="Iida H."/>
            <person name="Vavassori S."/>
            <person name="Sitia R."/>
            <person name="Suzuki M."/>
        </authorList>
    </citation>
    <scope>X-RAY CRYSTALLOGRAPHY (2.35 ANGSTROMS) OF 22-468</scope>
    <scope>COFACTOR BINDING SITES</scope>
    <scope>DISULFIDE BONDS</scope>
</reference>
<keyword id="KW-0002">3D-structure</keyword>
<keyword id="KW-0053">Apoptosis</keyword>
<keyword id="KW-0966">Cell projection</keyword>
<keyword id="KW-0903">Direct protein sequencing</keyword>
<keyword id="KW-1015">Disulfide bond</keyword>
<keyword id="KW-0249">Electron transport</keyword>
<keyword id="KW-0256">Endoplasmic reticulum</keyword>
<keyword id="KW-0274">FAD</keyword>
<keyword id="KW-0285">Flavoprotein</keyword>
<keyword id="KW-0325">Glycoprotein</keyword>
<keyword id="KW-0333">Golgi apparatus</keyword>
<keyword id="KW-0472">Membrane</keyword>
<keyword id="KW-0560">Oxidoreductase</keyword>
<keyword id="KW-0597">Phosphoprotein</keyword>
<keyword id="KW-1267">Proteomics identification</keyword>
<keyword id="KW-0676">Redox-active center</keyword>
<keyword id="KW-1185">Reference proteome</keyword>
<keyword id="KW-0964">Secreted</keyword>
<keyword id="KW-0732">Signal</keyword>
<keyword id="KW-0813">Transport</keyword>